<evidence type="ECO:0000250" key="1"/>
<evidence type="ECO:0000255" key="2">
    <source>
        <dbReference type="HAMAP-Rule" id="MF_00100"/>
    </source>
</evidence>
<evidence type="ECO:0000256" key="3">
    <source>
        <dbReference type="SAM" id="MobiDB-lite"/>
    </source>
</evidence>
<keyword id="KW-0963">Cytoplasm</keyword>
<keyword id="KW-0342">GTP-binding</keyword>
<keyword id="KW-0396">Initiation factor</keyword>
<keyword id="KW-0547">Nucleotide-binding</keyword>
<keyword id="KW-0648">Protein biosynthesis</keyword>
<feature type="chain" id="PRO_1000093832" description="Translation initiation factor IF-2">
    <location>
        <begin position="1"/>
        <end position="930"/>
    </location>
</feature>
<feature type="domain" description="tr-type G">
    <location>
        <begin position="432"/>
        <end position="599"/>
    </location>
</feature>
<feature type="region of interest" description="Disordered" evidence="3">
    <location>
        <begin position="50"/>
        <end position="195"/>
    </location>
</feature>
<feature type="region of interest" description="Disordered" evidence="3">
    <location>
        <begin position="260"/>
        <end position="346"/>
    </location>
</feature>
<feature type="region of interest" description="G1" evidence="1">
    <location>
        <begin position="441"/>
        <end position="448"/>
    </location>
</feature>
<feature type="region of interest" description="G2" evidence="1">
    <location>
        <begin position="466"/>
        <end position="470"/>
    </location>
</feature>
<feature type="region of interest" description="G3" evidence="1">
    <location>
        <begin position="487"/>
        <end position="490"/>
    </location>
</feature>
<feature type="region of interest" description="G4" evidence="1">
    <location>
        <begin position="541"/>
        <end position="544"/>
    </location>
</feature>
<feature type="region of interest" description="G5" evidence="1">
    <location>
        <begin position="577"/>
        <end position="579"/>
    </location>
</feature>
<feature type="compositionally biased region" description="Low complexity" evidence="3">
    <location>
        <begin position="50"/>
        <end position="67"/>
    </location>
</feature>
<feature type="compositionally biased region" description="Basic and acidic residues" evidence="3">
    <location>
        <begin position="68"/>
        <end position="90"/>
    </location>
</feature>
<feature type="compositionally biased region" description="Basic and acidic residues" evidence="3">
    <location>
        <begin position="110"/>
        <end position="125"/>
    </location>
</feature>
<feature type="compositionally biased region" description="Low complexity" evidence="3">
    <location>
        <begin position="129"/>
        <end position="141"/>
    </location>
</feature>
<feature type="compositionally biased region" description="Basic and acidic residues" evidence="3">
    <location>
        <begin position="157"/>
        <end position="167"/>
    </location>
</feature>
<feature type="compositionally biased region" description="Basic and acidic residues" evidence="3">
    <location>
        <begin position="262"/>
        <end position="295"/>
    </location>
</feature>
<feature type="compositionally biased region" description="Low complexity" evidence="3">
    <location>
        <begin position="309"/>
        <end position="318"/>
    </location>
</feature>
<feature type="compositionally biased region" description="Basic and acidic residues" evidence="3">
    <location>
        <begin position="337"/>
        <end position="346"/>
    </location>
</feature>
<feature type="binding site" evidence="2">
    <location>
        <begin position="441"/>
        <end position="448"/>
    </location>
    <ligand>
        <name>GTP</name>
        <dbReference type="ChEBI" id="CHEBI:37565"/>
    </ligand>
</feature>
<feature type="binding site" evidence="2">
    <location>
        <begin position="487"/>
        <end position="491"/>
    </location>
    <ligand>
        <name>GTP</name>
        <dbReference type="ChEBI" id="CHEBI:37565"/>
    </ligand>
</feature>
<feature type="binding site" evidence="2">
    <location>
        <begin position="541"/>
        <end position="544"/>
    </location>
    <ligand>
        <name>GTP</name>
        <dbReference type="ChEBI" id="CHEBI:37565"/>
    </ligand>
</feature>
<comment type="function">
    <text evidence="2">One of the essential components for the initiation of protein synthesis. Protects formylmethionyl-tRNA from spontaneous hydrolysis and promotes its binding to the 30S ribosomal subunits. Also involved in the hydrolysis of GTP during the formation of the 70S ribosomal complex.</text>
</comment>
<comment type="subcellular location">
    <subcellularLocation>
        <location evidence="2">Cytoplasm</location>
    </subcellularLocation>
</comment>
<comment type="similarity">
    <text evidence="2">Belongs to the TRAFAC class translation factor GTPase superfamily. Classic translation factor GTPase family. IF-2 subfamily.</text>
</comment>
<organism>
    <name type="scientific">Streptococcus pneumoniae (strain Hungary19A-6)</name>
    <dbReference type="NCBI Taxonomy" id="487214"/>
    <lineage>
        <taxon>Bacteria</taxon>
        <taxon>Bacillati</taxon>
        <taxon>Bacillota</taxon>
        <taxon>Bacilli</taxon>
        <taxon>Lactobacillales</taxon>
        <taxon>Streptococcaceae</taxon>
        <taxon>Streptococcus</taxon>
    </lineage>
</organism>
<proteinExistence type="inferred from homology"/>
<dbReference type="EMBL" id="CP000936">
    <property type="protein sequence ID" value="ACA37465.1"/>
    <property type="molecule type" value="Genomic_DNA"/>
</dbReference>
<dbReference type="RefSeq" id="WP_000039220.1">
    <property type="nucleotide sequence ID" value="NC_010380.1"/>
</dbReference>
<dbReference type="SMR" id="B1IA80"/>
<dbReference type="KEGG" id="spv:SPH_0653"/>
<dbReference type="HOGENOM" id="CLU_006301_5_0_9"/>
<dbReference type="Proteomes" id="UP000002163">
    <property type="component" value="Chromosome"/>
</dbReference>
<dbReference type="GO" id="GO:0005829">
    <property type="term" value="C:cytosol"/>
    <property type="evidence" value="ECO:0007669"/>
    <property type="project" value="TreeGrafter"/>
</dbReference>
<dbReference type="GO" id="GO:0005525">
    <property type="term" value="F:GTP binding"/>
    <property type="evidence" value="ECO:0007669"/>
    <property type="project" value="UniProtKB-KW"/>
</dbReference>
<dbReference type="GO" id="GO:0003924">
    <property type="term" value="F:GTPase activity"/>
    <property type="evidence" value="ECO:0007669"/>
    <property type="project" value="UniProtKB-UniRule"/>
</dbReference>
<dbReference type="GO" id="GO:0003743">
    <property type="term" value="F:translation initiation factor activity"/>
    <property type="evidence" value="ECO:0007669"/>
    <property type="project" value="UniProtKB-UniRule"/>
</dbReference>
<dbReference type="CDD" id="cd01887">
    <property type="entry name" value="IF2_eIF5B"/>
    <property type="match status" value="1"/>
</dbReference>
<dbReference type="CDD" id="cd03702">
    <property type="entry name" value="IF2_mtIF2_II"/>
    <property type="match status" value="1"/>
</dbReference>
<dbReference type="CDD" id="cd03692">
    <property type="entry name" value="mtIF2_IVc"/>
    <property type="match status" value="1"/>
</dbReference>
<dbReference type="FunFam" id="1.10.10.2480:FF:000003">
    <property type="entry name" value="Translation initiation factor IF-2"/>
    <property type="match status" value="1"/>
</dbReference>
<dbReference type="FunFam" id="2.40.30.10:FF:000007">
    <property type="entry name" value="Translation initiation factor IF-2"/>
    <property type="match status" value="1"/>
</dbReference>
<dbReference type="FunFam" id="2.40.30.10:FF:000008">
    <property type="entry name" value="Translation initiation factor IF-2"/>
    <property type="match status" value="1"/>
</dbReference>
<dbReference type="FunFam" id="3.40.50.10050:FF:000001">
    <property type="entry name" value="Translation initiation factor IF-2"/>
    <property type="match status" value="1"/>
</dbReference>
<dbReference type="FunFam" id="3.40.50.300:FF:000019">
    <property type="entry name" value="Translation initiation factor IF-2"/>
    <property type="match status" value="1"/>
</dbReference>
<dbReference type="Gene3D" id="1.10.10.2480">
    <property type="match status" value="1"/>
</dbReference>
<dbReference type="Gene3D" id="3.40.50.300">
    <property type="entry name" value="P-loop containing nucleotide triphosphate hydrolases"/>
    <property type="match status" value="1"/>
</dbReference>
<dbReference type="Gene3D" id="2.40.30.10">
    <property type="entry name" value="Translation factors"/>
    <property type="match status" value="2"/>
</dbReference>
<dbReference type="Gene3D" id="3.40.50.10050">
    <property type="entry name" value="Translation initiation factor IF- 2, domain 3"/>
    <property type="match status" value="1"/>
</dbReference>
<dbReference type="HAMAP" id="MF_00100_B">
    <property type="entry name" value="IF_2_B"/>
    <property type="match status" value="1"/>
</dbReference>
<dbReference type="InterPro" id="IPR053905">
    <property type="entry name" value="EF-G-like_DII"/>
</dbReference>
<dbReference type="InterPro" id="IPR044145">
    <property type="entry name" value="IF2_II"/>
</dbReference>
<dbReference type="InterPro" id="IPR006847">
    <property type="entry name" value="IF2_N"/>
</dbReference>
<dbReference type="InterPro" id="IPR027417">
    <property type="entry name" value="P-loop_NTPase"/>
</dbReference>
<dbReference type="InterPro" id="IPR005225">
    <property type="entry name" value="Small_GTP-bd"/>
</dbReference>
<dbReference type="InterPro" id="IPR000795">
    <property type="entry name" value="T_Tr_GTP-bd_dom"/>
</dbReference>
<dbReference type="InterPro" id="IPR000178">
    <property type="entry name" value="TF_IF2_bacterial-like"/>
</dbReference>
<dbReference type="InterPro" id="IPR015760">
    <property type="entry name" value="TIF_IF2"/>
</dbReference>
<dbReference type="InterPro" id="IPR023115">
    <property type="entry name" value="TIF_IF2_dom3"/>
</dbReference>
<dbReference type="InterPro" id="IPR036925">
    <property type="entry name" value="TIF_IF2_dom3_sf"/>
</dbReference>
<dbReference type="InterPro" id="IPR009000">
    <property type="entry name" value="Transl_B-barrel_sf"/>
</dbReference>
<dbReference type="NCBIfam" id="TIGR00487">
    <property type="entry name" value="IF-2"/>
    <property type="match status" value="1"/>
</dbReference>
<dbReference type="NCBIfam" id="TIGR00231">
    <property type="entry name" value="small_GTP"/>
    <property type="match status" value="1"/>
</dbReference>
<dbReference type="PANTHER" id="PTHR43381:SF5">
    <property type="entry name" value="TR-TYPE G DOMAIN-CONTAINING PROTEIN"/>
    <property type="match status" value="1"/>
</dbReference>
<dbReference type="PANTHER" id="PTHR43381">
    <property type="entry name" value="TRANSLATION INITIATION FACTOR IF-2-RELATED"/>
    <property type="match status" value="1"/>
</dbReference>
<dbReference type="Pfam" id="PF22042">
    <property type="entry name" value="EF-G_D2"/>
    <property type="match status" value="1"/>
</dbReference>
<dbReference type="Pfam" id="PF00009">
    <property type="entry name" value="GTP_EFTU"/>
    <property type="match status" value="1"/>
</dbReference>
<dbReference type="Pfam" id="PF11987">
    <property type="entry name" value="IF-2"/>
    <property type="match status" value="1"/>
</dbReference>
<dbReference type="Pfam" id="PF04760">
    <property type="entry name" value="IF2_N"/>
    <property type="match status" value="2"/>
</dbReference>
<dbReference type="SUPFAM" id="SSF52156">
    <property type="entry name" value="Initiation factor IF2/eIF5b, domain 3"/>
    <property type="match status" value="1"/>
</dbReference>
<dbReference type="SUPFAM" id="SSF52540">
    <property type="entry name" value="P-loop containing nucleoside triphosphate hydrolases"/>
    <property type="match status" value="1"/>
</dbReference>
<dbReference type="SUPFAM" id="SSF50447">
    <property type="entry name" value="Translation proteins"/>
    <property type="match status" value="2"/>
</dbReference>
<dbReference type="PROSITE" id="PS51722">
    <property type="entry name" value="G_TR_2"/>
    <property type="match status" value="1"/>
</dbReference>
<dbReference type="PROSITE" id="PS01176">
    <property type="entry name" value="IF2"/>
    <property type="match status" value="1"/>
</dbReference>
<sequence length="930" mass="102965">MSKKRLYEIAKELGKESKEVVARAKELGLDVKSHSSSVEEAVAAKIAASFKPAAAPKVEAKPAAPKVSAEKKTEKSEPAKPAVAKEEAKPAEPVAPKTEKVAAKPQSRNFKAEREARAKEQAERRKQNKGNNRDQQQNGNRQKNDGRNGGKQGQSNRDNRRFNDQAKKQQGQQKRRNERRQQEDKRSNQAAPRIDFKARAAALKAEQNAEYARSSEERFKQYQAAKEALAQANKRKEPEEIFEEAAKLAEQAQQVQAVVEVVPEKKEPAVDTRRKKQARPDKNRDDYDHEEDGPRKQQKNRSSQNQVRNQKNSNWNNNKKNKKGNNKNNRNQTPKPVTERKFHELPTEFEYTDGMTVAEIAKRIKREPAEIVKKLFMMGVMATQNQSLDGETIELLMVDYGIEAKQKVEVDNADIERFFVEDGYLNEDELVERPPVVTIMGHVDHGKTTLLDTLRNSRVATGEAGGITQHIGAYQIVENGKKITFLDTPGHAAFTSMRARGASVTDITILVVAADDGVMPQTIEAINHSKAVNVPIIVAINKIDKPGANPERVIGELAEHGVMSTAWGGDSEFVEISAKFNQNIEELLETVLLVAEIQELKADPTVRAIGTVIEARLDKGKGAVATLLVQQGTLNVQDPIVVGNTFGRVRAMTNDLGRRVKVAGPSTPVSITGLNEAPMAGDHFAVYEDEKSARAAGEERAKRALMKQRQATQRVSLENLFDTLKAGELKSVNVIIKADVQGSVEALSASLQKIDVEGVKVTIVHSAVGAINESDVTLAEASNAFIVGFNVRPTPQARQQAEADDVEIRLHSIIYKVIEEMEEAMKGMLDPEFEEKVIGEAVIRETFKVSKVGTIGGFMVINGKVARDSKVRVIRDGVVIYDGELASLKHYKDDVKEVTNGREGGLMIDGYNDIKMDDVIEAYVMEEIKR</sequence>
<reference key="1">
    <citation type="journal article" date="2010" name="Genome Biol.">
        <title>Structure and dynamics of the pan-genome of Streptococcus pneumoniae and closely related species.</title>
        <authorList>
            <person name="Donati C."/>
            <person name="Hiller N.L."/>
            <person name="Tettelin H."/>
            <person name="Muzzi A."/>
            <person name="Croucher N.J."/>
            <person name="Angiuoli S.V."/>
            <person name="Oggioni M."/>
            <person name="Dunning Hotopp J.C."/>
            <person name="Hu F.Z."/>
            <person name="Riley D.R."/>
            <person name="Covacci A."/>
            <person name="Mitchell T.J."/>
            <person name="Bentley S.D."/>
            <person name="Kilian M."/>
            <person name="Ehrlich G.D."/>
            <person name="Rappuoli R."/>
            <person name="Moxon E.R."/>
            <person name="Masignani V."/>
        </authorList>
    </citation>
    <scope>NUCLEOTIDE SEQUENCE [LARGE SCALE GENOMIC DNA]</scope>
    <source>
        <strain>Hungary19A-6</strain>
    </source>
</reference>
<protein>
    <recommendedName>
        <fullName evidence="2">Translation initiation factor IF-2</fullName>
    </recommendedName>
</protein>
<gene>
    <name evidence="2" type="primary">infB</name>
    <name type="ordered locus">SPH_0653</name>
</gene>
<name>IF2_STRPI</name>
<accession>B1IA80</accession>